<gene>
    <name evidence="1" type="primary">mnmG</name>
    <name evidence="1" type="synonym">gidA</name>
    <name type="ordered locus">CPS_5047</name>
</gene>
<keyword id="KW-0963">Cytoplasm</keyword>
<keyword id="KW-0274">FAD</keyword>
<keyword id="KW-0285">Flavoprotein</keyword>
<keyword id="KW-0520">NAD</keyword>
<keyword id="KW-0819">tRNA processing</keyword>
<sequence length="629" mass="70140">MWYQESYDVIVVGGGHAGTEASLAAARMGCKTLLLTHNIDTLGQMSCNPAIGGIGKGHLVKEIDALGGLMATAIDHSAIQFRTLNSSKGPAVRATRAQADRILYRNYVRNTLENQENLTIFQQPCDDLILENDRVVGVSTQMGLKFKGKSVVLTVGTFLSGLIHIGLNNYQGGRAGDPASVNLAAKMRDMPFRMDRLKTGTPPRLDARSLDFSVMEEQAGDTPSPVFSFMGSQADHPEQISCFITHTNEQTHQHIRDGLDRSPMYTGVIEGVGPRYCPSIEDKITRFADKSSHQIFVEPEGLTTHEVYPNGISTSLPFDVQMNLVRSIKGFENAFITRPGYAIEYDYFDPRDLKQSLESKFVQNLYFAGQINGTTGYEEAGAQGLIAGANAANRVKERDEFTLGRDQAYMGVLIDDLATLGTKEPYRMFTSRAEYRLLLREDNADIRLTEQGRKIGLVGDTRWQRFNEKMENVELERQRLRSTWVQKDHTKIDQINALLKTPMSKEASLEDLIRRPEVNYTDLMKIEGLGPAIEDSQASEQIEIQTKYAGYIDRQLDEIAKKKRNEDTKIPRDFDYQQISGLSNEVVAKLKDACPETIGKASRISGITPAAISLLLVYLKKHGLLRKLA</sequence>
<dbReference type="EMBL" id="CP000083">
    <property type="protein sequence ID" value="AAZ25703.1"/>
    <property type="molecule type" value="Genomic_DNA"/>
</dbReference>
<dbReference type="RefSeq" id="WP_011045765.1">
    <property type="nucleotide sequence ID" value="NC_003910.7"/>
</dbReference>
<dbReference type="SMR" id="Q47U38"/>
<dbReference type="STRING" id="167879.CPS_5047"/>
<dbReference type="KEGG" id="cps:CPS_5047"/>
<dbReference type="eggNOG" id="COG0445">
    <property type="taxonomic scope" value="Bacteria"/>
</dbReference>
<dbReference type="HOGENOM" id="CLU_007831_2_2_6"/>
<dbReference type="Proteomes" id="UP000000547">
    <property type="component" value="Chromosome"/>
</dbReference>
<dbReference type="GO" id="GO:0005829">
    <property type="term" value="C:cytosol"/>
    <property type="evidence" value="ECO:0007669"/>
    <property type="project" value="TreeGrafter"/>
</dbReference>
<dbReference type="GO" id="GO:0050660">
    <property type="term" value="F:flavin adenine dinucleotide binding"/>
    <property type="evidence" value="ECO:0007669"/>
    <property type="project" value="UniProtKB-UniRule"/>
</dbReference>
<dbReference type="GO" id="GO:0030488">
    <property type="term" value="P:tRNA methylation"/>
    <property type="evidence" value="ECO:0007669"/>
    <property type="project" value="TreeGrafter"/>
</dbReference>
<dbReference type="GO" id="GO:0002098">
    <property type="term" value="P:tRNA wobble uridine modification"/>
    <property type="evidence" value="ECO:0007669"/>
    <property type="project" value="InterPro"/>
</dbReference>
<dbReference type="FunFam" id="1.10.10.1800:FF:000001">
    <property type="entry name" value="tRNA uridine 5-carboxymethylaminomethyl modification enzyme MnmG"/>
    <property type="match status" value="1"/>
</dbReference>
<dbReference type="FunFam" id="1.10.150.570:FF:000001">
    <property type="entry name" value="tRNA uridine 5-carboxymethylaminomethyl modification enzyme MnmG"/>
    <property type="match status" value="1"/>
</dbReference>
<dbReference type="FunFam" id="3.50.50.60:FF:000002">
    <property type="entry name" value="tRNA uridine 5-carboxymethylaminomethyl modification enzyme MnmG"/>
    <property type="match status" value="1"/>
</dbReference>
<dbReference type="FunFam" id="3.50.50.60:FF:000010">
    <property type="entry name" value="tRNA uridine 5-carboxymethylaminomethyl modification enzyme MnmG"/>
    <property type="match status" value="1"/>
</dbReference>
<dbReference type="Gene3D" id="3.50.50.60">
    <property type="entry name" value="FAD/NAD(P)-binding domain"/>
    <property type="match status" value="2"/>
</dbReference>
<dbReference type="Gene3D" id="1.10.150.570">
    <property type="entry name" value="GidA associated domain, C-terminal subdomain"/>
    <property type="match status" value="1"/>
</dbReference>
<dbReference type="Gene3D" id="1.10.10.1800">
    <property type="entry name" value="tRNA uridine 5-carboxymethylaminomethyl modification enzyme MnmG/GidA"/>
    <property type="match status" value="1"/>
</dbReference>
<dbReference type="HAMAP" id="MF_00129">
    <property type="entry name" value="MnmG_GidA"/>
    <property type="match status" value="1"/>
</dbReference>
<dbReference type="InterPro" id="IPR036188">
    <property type="entry name" value="FAD/NAD-bd_sf"/>
</dbReference>
<dbReference type="InterPro" id="IPR049312">
    <property type="entry name" value="GIDA_C_N"/>
</dbReference>
<dbReference type="InterPro" id="IPR004416">
    <property type="entry name" value="MnmG"/>
</dbReference>
<dbReference type="InterPro" id="IPR002218">
    <property type="entry name" value="MnmG-rel"/>
</dbReference>
<dbReference type="InterPro" id="IPR020595">
    <property type="entry name" value="MnmG-rel_CS"/>
</dbReference>
<dbReference type="InterPro" id="IPR026904">
    <property type="entry name" value="MnmG_C"/>
</dbReference>
<dbReference type="InterPro" id="IPR047001">
    <property type="entry name" value="MnmG_C_subdom"/>
</dbReference>
<dbReference type="InterPro" id="IPR044920">
    <property type="entry name" value="MnmG_C_subdom_sf"/>
</dbReference>
<dbReference type="InterPro" id="IPR040131">
    <property type="entry name" value="MnmG_N"/>
</dbReference>
<dbReference type="NCBIfam" id="TIGR00136">
    <property type="entry name" value="mnmG_gidA"/>
    <property type="match status" value="1"/>
</dbReference>
<dbReference type="PANTHER" id="PTHR11806">
    <property type="entry name" value="GLUCOSE INHIBITED DIVISION PROTEIN A"/>
    <property type="match status" value="1"/>
</dbReference>
<dbReference type="PANTHER" id="PTHR11806:SF0">
    <property type="entry name" value="PROTEIN MTO1 HOMOLOG, MITOCHONDRIAL"/>
    <property type="match status" value="1"/>
</dbReference>
<dbReference type="Pfam" id="PF01134">
    <property type="entry name" value="GIDA"/>
    <property type="match status" value="1"/>
</dbReference>
<dbReference type="Pfam" id="PF21680">
    <property type="entry name" value="GIDA_C_1st"/>
    <property type="match status" value="1"/>
</dbReference>
<dbReference type="Pfam" id="PF13932">
    <property type="entry name" value="SAM_GIDA_C"/>
    <property type="match status" value="1"/>
</dbReference>
<dbReference type="SMART" id="SM01228">
    <property type="entry name" value="GIDA_assoc_3"/>
    <property type="match status" value="1"/>
</dbReference>
<dbReference type="SUPFAM" id="SSF51905">
    <property type="entry name" value="FAD/NAD(P)-binding domain"/>
    <property type="match status" value="1"/>
</dbReference>
<dbReference type="PROSITE" id="PS01280">
    <property type="entry name" value="GIDA_1"/>
    <property type="match status" value="1"/>
</dbReference>
<dbReference type="PROSITE" id="PS01281">
    <property type="entry name" value="GIDA_2"/>
    <property type="match status" value="1"/>
</dbReference>
<accession>Q47U38</accession>
<reference key="1">
    <citation type="journal article" date="2005" name="Proc. Natl. Acad. Sci. U.S.A.">
        <title>The psychrophilic lifestyle as revealed by the genome sequence of Colwellia psychrerythraea 34H through genomic and proteomic analyses.</title>
        <authorList>
            <person name="Methe B.A."/>
            <person name="Nelson K.E."/>
            <person name="Deming J.W."/>
            <person name="Momen B."/>
            <person name="Melamud E."/>
            <person name="Zhang X."/>
            <person name="Moult J."/>
            <person name="Madupu R."/>
            <person name="Nelson W.C."/>
            <person name="Dodson R.J."/>
            <person name="Brinkac L.M."/>
            <person name="Daugherty S.C."/>
            <person name="Durkin A.S."/>
            <person name="DeBoy R.T."/>
            <person name="Kolonay J.F."/>
            <person name="Sullivan S.A."/>
            <person name="Zhou L."/>
            <person name="Davidsen T.M."/>
            <person name="Wu M."/>
            <person name="Huston A.L."/>
            <person name="Lewis M."/>
            <person name="Weaver B."/>
            <person name="Weidman J.F."/>
            <person name="Khouri H."/>
            <person name="Utterback T.R."/>
            <person name="Feldblyum T.V."/>
            <person name="Fraser C.M."/>
        </authorList>
    </citation>
    <scope>NUCLEOTIDE SEQUENCE [LARGE SCALE GENOMIC DNA]</scope>
    <source>
        <strain>34H / ATCC BAA-681</strain>
    </source>
</reference>
<organism>
    <name type="scientific">Colwellia psychrerythraea (strain 34H / ATCC BAA-681)</name>
    <name type="common">Vibrio psychroerythus</name>
    <dbReference type="NCBI Taxonomy" id="167879"/>
    <lineage>
        <taxon>Bacteria</taxon>
        <taxon>Pseudomonadati</taxon>
        <taxon>Pseudomonadota</taxon>
        <taxon>Gammaproteobacteria</taxon>
        <taxon>Alteromonadales</taxon>
        <taxon>Colwelliaceae</taxon>
        <taxon>Colwellia</taxon>
    </lineage>
</organism>
<evidence type="ECO:0000255" key="1">
    <source>
        <dbReference type="HAMAP-Rule" id="MF_00129"/>
    </source>
</evidence>
<name>MNMG_COLP3</name>
<comment type="function">
    <text evidence="1">NAD-binding protein involved in the addition of a carboxymethylaminomethyl (cmnm) group at the wobble position (U34) of certain tRNAs, forming tRNA-cmnm(5)s(2)U34.</text>
</comment>
<comment type="cofactor">
    <cofactor evidence="1">
        <name>FAD</name>
        <dbReference type="ChEBI" id="CHEBI:57692"/>
    </cofactor>
</comment>
<comment type="subunit">
    <text evidence="1">Homodimer. Heterotetramer of two MnmE and two MnmG subunits.</text>
</comment>
<comment type="subcellular location">
    <subcellularLocation>
        <location evidence="1">Cytoplasm</location>
    </subcellularLocation>
</comment>
<comment type="similarity">
    <text evidence="1">Belongs to the MnmG family.</text>
</comment>
<proteinExistence type="inferred from homology"/>
<feature type="chain" id="PRO_0000117090" description="tRNA uridine 5-carboxymethylaminomethyl modification enzyme MnmG">
    <location>
        <begin position="1"/>
        <end position="629"/>
    </location>
</feature>
<feature type="binding site" evidence="1">
    <location>
        <begin position="13"/>
        <end position="18"/>
    </location>
    <ligand>
        <name>FAD</name>
        <dbReference type="ChEBI" id="CHEBI:57692"/>
    </ligand>
</feature>
<feature type="binding site" evidence="1">
    <location>
        <begin position="273"/>
        <end position="287"/>
    </location>
    <ligand>
        <name>NAD(+)</name>
        <dbReference type="ChEBI" id="CHEBI:57540"/>
    </ligand>
</feature>
<protein>
    <recommendedName>
        <fullName evidence="1">tRNA uridine 5-carboxymethylaminomethyl modification enzyme MnmG</fullName>
    </recommendedName>
    <alternativeName>
        <fullName evidence="1">Glucose-inhibited division protein A</fullName>
    </alternativeName>
</protein>